<gene>
    <name type="ordered locus">At4g39000</name>
    <name type="ORF">F19H22.100</name>
</gene>
<evidence type="ECO:0000250" key="1"/>
<evidence type="ECO:0000255" key="2"/>
<evidence type="ECO:0000255" key="3">
    <source>
        <dbReference type="PROSITE-ProRule" id="PRU10059"/>
    </source>
</evidence>
<evidence type="ECO:0000255" key="4">
    <source>
        <dbReference type="PROSITE-ProRule" id="PRU10140"/>
    </source>
</evidence>
<evidence type="ECO:0000303" key="5">
    <source>
    </source>
</evidence>
<evidence type="ECO:0000305" key="6"/>
<reference key="1">
    <citation type="journal article" date="1999" name="Nature">
        <title>Sequence and analysis of chromosome 4 of the plant Arabidopsis thaliana.</title>
        <authorList>
            <person name="Mayer K.F.X."/>
            <person name="Schueller C."/>
            <person name="Wambutt R."/>
            <person name="Murphy G."/>
            <person name="Volckaert G."/>
            <person name="Pohl T."/>
            <person name="Duesterhoeft A."/>
            <person name="Stiekema W."/>
            <person name="Entian K.-D."/>
            <person name="Terryn N."/>
            <person name="Harris B."/>
            <person name="Ansorge W."/>
            <person name="Brandt P."/>
            <person name="Grivell L.A."/>
            <person name="Rieger M."/>
            <person name="Weichselgartner M."/>
            <person name="de Simone V."/>
            <person name="Obermaier B."/>
            <person name="Mache R."/>
            <person name="Mueller M."/>
            <person name="Kreis M."/>
            <person name="Delseny M."/>
            <person name="Puigdomenech P."/>
            <person name="Watson M."/>
            <person name="Schmidtheini T."/>
            <person name="Reichert B."/>
            <person name="Portetelle D."/>
            <person name="Perez-Alonso M."/>
            <person name="Boutry M."/>
            <person name="Bancroft I."/>
            <person name="Vos P."/>
            <person name="Hoheisel J."/>
            <person name="Zimmermann W."/>
            <person name="Wedler H."/>
            <person name="Ridley P."/>
            <person name="Langham S.-A."/>
            <person name="McCullagh B."/>
            <person name="Bilham L."/>
            <person name="Robben J."/>
            <person name="van der Schueren J."/>
            <person name="Grymonprez B."/>
            <person name="Chuang Y.-J."/>
            <person name="Vandenbussche F."/>
            <person name="Braeken M."/>
            <person name="Weltjens I."/>
            <person name="Voet M."/>
            <person name="Bastiaens I."/>
            <person name="Aert R."/>
            <person name="Defoor E."/>
            <person name="Weitzenegger T."/>
            <person name="Bothe G."/>
            <person name="Ramsperger U."/>
            <person name="Hilbert H."/>
            <person name="Braun M."/>
            <person name="Holzer E."/>
            <person name="Brandt A."/>
            <person name="Peters S."/>
            <person name="van Staveren M."/>
            <person name="Dirkse W."/>
            <person name="Mooijman P."/>
            <person name="Klein Lankhorst R."/>
            <person name="Rose M."/>
            <person name="Hauf J."/>
            <person name="Koetter P."/>
            <person name="Berneiser S."/>
            <person name="Hempel S."/>
            <person name="Feldpausch M."/>
            <person name="Lamberth S."/>
            <person name="Van den Daele H."/>
            <person name="De Keyser A."/>
            <person name="Buysshaert C."/>
            <person name="Gielen J."/>
            <person name="Villarroel R."/>
            <person name="De Clercq R."/>
            <person name="van Montagu M."/>
            <person name="Rogers J."/>
            <person name="Cronin A."/>
            <person name="Quail M.A."/>
            <person name="Bray-Allen S."/>
            <person name="Clark L."/>
            <person name="Doggett J."/>
            <person name="Hall S."/>
            <person name="Kay M."/>
            <person name="Lennard N."/>
            <person name="McLay K."/>
            <person name="Mayes R."/>
            <person name="Pettett A."/>
            <person name="Rajandream M.A."/>
            <person name="Lyne M."/>
            <person name="Benes V."/>
            <person name="Rechmann S."/>
            <person name="Borkova D."/>
            <person name="Bloecker H."/>
            <person name="Scharfe M."/>
            <person name="Grimm M."/>
            <person name="Loehnert T.-H."/>
            <person name="Dose S."/>
            <person name="de Haan M."/>
            <person name="Maarse A.C."/>
            <person name="Schaefer M."/>
            <person name="Mueller-Auer S."/>
            <person name="Gabel C."/>
            <person name="Fuchs M."/>
            <person name="Fartmann B."/>
            <person name="Granderath K."/>
            <person name="Dauner D."/>
            <person name="Herzl A."/>
            <person name="Neumann S."/>
            <person name="Argiriou A."/>
            <person name="Vitale D."/>
            <person name="Liguori R."/>
            <person name="Piravandi E."/>
            <person name="Massenet O."/>
            <person name="Quigley F."/>
            <person name="Clabauld G."/>
            <person name="Muendlein A."/>
            <person name="Felber R."/>
            <person name="Schnabl S."/>
            <person name="Hiller R."/>
            <person name="Schmidt W."/>
            <person name="Lecharny A."/>
            <person name="Aubourg S."/>
            <person name="Chefdor F."/>
            <person name="Cooke R."/>
            <person name="Berger C."/>
            <person name="Monfort A."/>
            <person name="Casacuberta E."/>
            <person name="Gibbons T."/>
            <person name="Weber N."/>
            <person name="Vandenbol M."/>
            <person name="Bargues M."/>
            <person name="Terol J."/>
            <person name="Torres A."/>
            <person name="Perez-Perez A."/>
            <person name="Purnelle B."/>
            <person name="Bent E."/>
            <person name="Johnson S."/>
            <person name="Tacon D."/>
            <person name="Jesse T."/>
            <person name="Heijnen L."/>
            <person name="Schwarz S."/>
            <person name="Scholler P."/>
            <person name="Heber S."/>
            <person name="Francs P."/>
            <person name="Bielke C."/>
            <person name="Frishman D."/>
            <person name="Haase D."/>
            <person name="Lemcke K."/>
            <person name="Mewes H.-W."/>
            <person name="Stocker S."/>
            <person name="Zaccaria P."/>
            <person name="Bevan M."/>
            <person name="Wilson R.K."/>
            <person name="de la Bastide M."/>
            <person name="Habermann K."/>
            <person name="Parnell L."/>
            <person name="Dedhia N."/>
            <person name="Gnoj L."/>
            <person name="Schutz K."/>
            <person name="Huang E."/>
            <person name="Spiegel L."/>
            <person name="Sekhon M."/>
            <person name="Murray J."/>
            <person name="Sheet P."/>
            <person name="Cordes M."/>
            <person name="Abu-Threideh J."/>
            <person name="Stoneking T."/>
            <person name="Kalicki J."/>
            <person name="Graves T."/>
            <person name="Harmon G."/>
            <person name="Edwards J."/>
            <person name="Latreille P."/>
            <person name="Courtney L."/>
            <person name="Cloud J."/>
            <person name="Abbott A."/>
            <person name="Scott K."/>
            <person name="Johnson D."/>
            <person name="Minx P."/>
            <person name="Bentley D."/>
            <person name="Fulton B."/>
            <person name="Miller N."/>
            <person name="Greco T."/>
            <person name="Kemp K."/>
            <person name="Kramer J."/>
            <person name="Fulton L."/>
            <person name="Mardis E."/>
            <person name="Dante M."/>
            <person name="Pepin K."/>
            <person name="Hillier L.W."/>
            <person name="Nelson J."/>
            <person name="Spieth J."/>
            <person name="Ryan E."/>
            <person name="Andrews S."/>
            <person name="Geisel C."/>
            <person name="Layman D."/>
            <person name="Du H."/>
            <person name="Ali J."/>
            <person name="Berghoff A."/>
            <person name="Jones K."/>
            <person name="Drone K."/>
            <person name="Cotton M."/>
            <person name="Joshu C."/>
            <person name="Antonoiu B."/>
            <person name="Zidanic M."/>
            <person name="Strong C."/>
            <person name="Sun H."/>
            <person name="Lamar B."/>
            <person name="Yordan C."/>
            <person name="Ma P."/>
            <person name="Zhong J."/>
            <person name="Preston R."/>
            <person name="Vil D."/>
            <person name="Shekher M."/>
            <person name="Matero A."/>
            <person name="Shah R."/>
            <person name="Swaby I.K."/>
            <person name="O'Shaughnessy A."/>
            <person name="Rodriguez M."/>
            <person name="Hoffman J."/>
            <person name="Till S."/>
            <person name="Granat S."/>
            <person name="Shohdy N."/>
            <person name="Hasegawa A."/>
            <person name="Hameed A."/>
            <person name="Lodhi M."/>
            <person name="Johnson A."/>
            <person name="Chen E."/>
            <person name="Marra M.A."/>
            <person name="Martienssen R."/>
            <person name="McCombie W.R."/>
        </authorList>
    </citation>
    <scope>NUCLEOTIDE SEQUENCE [LARGE SCALE GENOMIC DNA]</scope>
    <source>
        <strain>cv. Columbia</strain>
    </source>
</reference>
<reference key="2">
    <citation type="journal article" date="2017" name="Plant J.">
        <title>Araport11: a complete reannotation of the Arabidopsis thaliana reference genome.</title>
        <authorList>
            <person name="Cheng C.Y."/>
            <person name="Krishnakumar V."/>
            <person name="Chan A.P."/>
            <person name="Thibaud-Nissen F."/>
            <person name="Schobel S."/>
            <person name="Town C.D."/>
        </authorList>
    </citation>
    <scope>GENOME REANNOTATION</scope>
    <source>
        <strain>cv. Columbia</strain>
    </source>
</reference>
<reference key="3">
    <citation type="journal article" date="2002" name="Science">
        <title>Functional annotation of a full-length Arabidopsis cDNA collection.</title>
        <authorList>
            <person name="Seki M."/>
            <person name="Narusaka M."/>
            <person name="Kamiya A."/>
            <person name="Ishida J."/>
            <person name="Satou M."/>
            <person name="Sakurai T."/>
            <person name="Nakajima M."/>
            <person name="Enju A."/>
            <person name="Akiyama K."/>
            <person name="Oono Y."/>
            <person name="Muramatsu M."/>
            <person name="Hayashizaki Y."/>
            <person name="Kawai J."/>
            <person name="Carninci P."/>
            <person name="Itoh M."/>
            <person name="Ishii Y."/>
            <person name="Arakawa T."/>
            <person name="Shibata K."/>
            <person name="Shinagawa A."/>
            <person name="Shinozaki K."/>
        </authorList>
    </citation>
    <scope>NUCLEOTIDE SEQUENCE [LARGE SCALE MRNA] (ISOFORM 2)</scope>
    <source>
        <strain>cv. Columbia</strain>
    </source>
</reference>
<reference key="4">
    <citation type="journal article" date="2006" name="Plant Biotechnol. J.">
        <title>Simultaneous high-throughput recombinational cloning of open reading frames in closed and open configurations.</title>
        <authorList>
            <person name="Underwood B.A."/>
            <person name="Vanderhaeghen R."/>
            <person name="Whitford R."/>
            <person name="Town C.D."/>
            <person name="Hilson P."/>
        </authorList>
    </citation>
    <scope>NUCLEOTIDE SEQUENCE [LARGE SCALE MRNA] (ISOFORM 1)</scope>
    <source>
        <strain>cv. Columbia</strain>
    </source>
</reference>
<reference key="5">
    <citation type="journal article" date="2004" name="J. Mol. Evol.">
        <title>Phylogenetic analysis of the plant endo-beta-1,4-glucanase gene family.</title>
        <authorList>
            <person name="Libertini E."/>
            <person name="Li Y."/>
            <person name="McQueen-Mason S.J."/>
        </authorList>
    </citation>
    <scope>GENE FAMILY</scope>
</reference>
<organism>
    <name type="scientific">Arabidopsis thaliana</name>
    <name type="common">Mouse-ear cress</name>
    <dbReference type="NCBI Taxonomy" id="3702"/>
    <lineage>
        <taxon>Eukaryota</taxon>
        <taxon>Viridiplantae</taxon>
        <taxon>Streptophyta</taxon>
        <taxon>Embryophyta</taxon>
        <taxon>Tracheophyta</taxon>
        <taxon>Spermatophyta</taxon>
        <taxon>Magnoliopsida</taxon>
        <taxon>eudicotyledons</taxon>
        <taxon>Gunneridae</taxon>
        <taxon>Pentapetalae</taxon>
        <taxon>rosids</taxon>
        <taxon>malvids</taxon>
        <taxon>Brassicales</taxon>
        <taxon>Brassicaceae</taxon>
        <taxon>Camelineae</taxon>
        <taxon>Arabidopsis</taxon>
    </lineage>
</organism>
<accession>Q8GY58</accession>
<accession>Q9SVJ3</accession>
<proteinExistence type="evidence at transcript level"/>
<name>GUN23_ARATH</name>
<keyword id="KW-0025">Alternative splicing</keyword>
<keyword id="KW-0119">Carbohydrate metabolism</keyword>
<keyword id="KW-0961">Cell wall biogenesis/degradation</keyword>
<keyword id="KW-0136">Cellulose degradation</keyword>
<keyword id="KW-0325">Glycoprotein</keyword>
<keyword id="KW-0326">Glycosidase</keyword>
<keyword id="KW-0378">Hydrolase</keyword>
<keyword id="KW-0624">Polysaccharide degradation</keyword>
<keyword id="KW-1185">Reference proteome</keyword>
<keyword id="KW-0964">Secreted</keyword>
<keyword id="KW-0732">Signal</keyword>
<sequence length="493" mass="54692">MKASIYLVTVFILLLLLLPTAIPHDYSDALRKSILFFEGQRSGRLPKQQRMAWRRNSALNDGKNLKTDLVGGYYDAGDNVKFHFPMAFTATMLAWSSVDFGRYMSQHDFRHNLVAVKWATDYLLKTVSQLPNRIFVHVGEVQPDHDCWERPEDMDTPRTAFALDAPYPASDLAGEIAAALAAASIAFKQANPKYSAILLNKAVQTFQYADSHRGSYTDNPGIKQAVCPFYCSVNGYKDELLWGAAWLRRATGEDSYLRYLVDNGQAFGESSNYFEFGWDNKVGGVNVLVAKEVLQNNVTAIAAYKDTAEKMMCSFLPETNGPHMSYTPGGLIYKPGSTQLQNTAALSFLLLTYADYLSTSSQQLNCGNLKFQPDSLRRIVKRQVDYVLGDNPMKLSYMIGYGERYPGLIHHRGSSIPSVTVHPAAFGCIAGWNIFSSPNPNPNILIGAVIGGPDVDDRFIGGRTNASETEPTTYINAPFVGVFAYFKSNPNFS</sequence>
<protein>
    <recommendedName>
        <fullName>Endoglucanase 23</fullName>
        <ecNumber>3.2.1.4</ecNumber>
    </recommendedName>
    <alternativeName>
        <fullName>Endo-1,4-beta glucanase 23</fullName>
    </alternativeName>
</protein>
<feature type="signal peptide" evidence="2">
    <location>
        <begin position="1"/>
        <end position="23"/>
    </location>
</feature>
<feature type="chain" id="PRO_0000249275" description="Endoglucanase 23">
    <location>
        <begin position="24"/>
        <end position="493"/>
    </location>
</feature>
<feature type="active site" description="Nucleophile" evidence="4">
    <location>
        <position position="78"/>
    </location>
</feature>
<feature type="active site" evidence="3">
    <location>
        <position position="410"/>
    </location>
</feature>
<feature type="active site" evidence="1">
    <location>
        <position position="470"/>
    </location>
</feature>
<feature type="glycosylation site" description="N-linked (GlcNAc...) asparagine" evidence="2">
    <location>
        <position position="297"/>
    </location>
</feature>
<feature type="glycosylation site" description="N-linked (GlcNAc...) asparagine" evidence="2">
    <location>
        <position position="465"/>
    </location>
</feature>
<feature type="splice variant" id="VSP_020387" description="In isoform 2." evidence="5">
    <original>EVLQNNVTAIAAYKDTAEK</original>
    <variation>VWSNFQNQTDVYIYDKCDR</variation>
    <location>
        <begin position="292"/>
        <end position="310"/>
    </location>
</feature>
<feature type="splice variant" id="VSP_020388" description="In isoform 2." evidence="5">
    <location>
        <begin position="311"/>
        <end position="493"/>
    </location>
</feature>
<feature type="sequence conflict" description="In Ref. 3; BAC42491." evidence="6" ref="3">
    <location>
        <position position="97"/>
    </location>
</feature>
<feature type="sequence conflict" description="In Ref. 3; BAC42491." evidence="6" ref="3">
    <original>S</original>
    <variation>T</variation>
    <location>
        <position position="215"/>
    </location>
</feature>
<dbReference type="EC" id="3.2.1.4"/>
<dbReference type="EMBL" id="AL035679">
    <property type="protein sequence ID" value="CAB38820.1"/>
    <property type="molecule type" value="Genomic_DNA"/>
</dbReference>
<dbReference type="EMBL" id="AL161594">
    <property type="protein sequence ID" value="CAB80563.1"/>
    <property type="molecule type" value="Genomic_DNA"/>
</dbReference>
<dbReference type="EMBL" id="CP002687">
    <property type="protein sequence ID" value="AEE87006.1"/>
    <property type="molecule type" value="Genomic_DNA"/>
</dbReference>
<dbReference type="EMBL" id="AK117850">
    <property type="protein sequence ID" value="BAC42491.1"/>
    <property type="molecule type" value="mRNA"/>
</dbReference>
<dbReference type="EMBL" id="DQ446906">
    <property type="protein sequence ID" value="ABE66120.1"/>
    <property type="molecule type" value="mRNA"/>
</dbReference>
<dbReference type="PIR" id="T06060">
    <property type="entry name" value="T06060"/>
</dbReference>
<dbReference type="RefSeq" id="NP_195611.1">
    <molecule id="Q8GY58-1"/>
    <property type="nucleotide sequence ID" value="NM_120060.2"/>
</dbReference>
<dbReference type="SMR" id="Q8GY58"/>
<dbReference type="FunCoup" id="Q8GY58">
    <property type="interactions" value="170"/>
</dbReference>
<dbReference type="STRING" id="3702.Q8GY58"/>
<dbReference type="CAZy" id="GH9">
    <property type="family name" value="Glycoside Hydrolase Family 9"/>
</dbReference>
<dbReference type="GlyGen" id="Q8GY58">
    <property type="glycosylation" value="2 sites"/>
</dbReference>
<dbReference type="PaxDb" id="3702-AT4G39000.1"/>
<dbReference type="ProteomicsDB" id="247317">
    <molecule id="Q8GY58-1"/>
</dbReference>
<dbReference type="EnsemblPlants" id="AT4G39000.1">
    <molecule id="Q8GY58-1"/>
    <property type="protein sequence ID" value="AT4G39000.1"/>
    <property type="gene ID" value="AT4G39000"/>
</dbReference>
<dbReference type="GeneID" id="830055"/>
<dbReference type="Gramene" id="AT4G39000.1">
    <molecule id="Q8GY58-1"/>
    <property type="protein sequence ID" value="AT4G39000.1"/>
    <property type="gene ID" value="AT4G39000"/>
</dbReference>
<dbReference type="KEGG" id="ath:AT4G39000"/>
<dbReference type="Araport" id="AT4G39000"/>
<dbReference type="TAIR" id="AT4G39000">
    <property type="gene designation" value="GH9B17"/>
</dbReference>
<dbReference type="eggNOG" id="ENOG502QV58">
    <property type="taxonomic scope" value="Eukaryota"/>
</dbReference>
<dbReference type="HOGENOM" id="CLU_008926_1_2_1"/>
<dbReference type="InParanoid" id="Q8GY58"/>
<dbReference type="OMA" id="ETNGPHM"/>
<dbReference type="PhylomeDB" id="Q8GY58"/>
<dbReference type="BioCyc" id="ARA:AT4G39000-MONOMER"/>
<dbReference type="PRO" id="PR:Q8GY58"/>
<dbReference type="Proteomes" id="UP000006548">
    <property type="component" value="Chromosome 4"/>
</dbReference>
<dbReference type="ExpressionAtlas" id="Q8GY58">
    <property type="expression patterns" value="baseline and differential"/>
</dbReference>
<dbReference type="GO" id="GO:0005576">
    <property type="term" value="C:extracellular region"/>
    <property type="evidence" value="ECO:0007669"/>
    <property type="project" value="UniProtKB-SubCell"/>
</dbReference>
<dbReference type="GO" id="GO:0008810">
    <property type="term" value="F:cellulase activity"/>
    <property type="evidence" value="ECO:0007669"/>
    <property type="project" value="UniProtKB-EC"/>
</dbReference>
<dbReference type="GO" id="GO:0071555">
    <property type="term" value="P:cell wall organization"/>
    <property type="evidence" value="ECO:0007669"/>
    <property type="project" value="UniProtKB-KW"/>
</dbReference>
<dbReference type="GO" id="GO:0030245">
    <property type="term" value="P:cellulose catabolic process"/>
    <property type="evidence" value="ECO:0007669"/>
    <property type="project" value="UniProtKB-KW"/>
</dbReference>
<dbReference type="FunFam" id="1.50.10.10:FF:000020">
    <property type="entry name" value="Endoglucanase"/>
    <property type="match status" value="1"/>
</dbReference>
<dbReference type="Gene3D" id="1.50.10.10">
    <property type="match status" value="1"/>
</dbReference>
<dbReference type="InterPro" id="IPR008928">
    <property type="entry name" value="6-hairpin_glycosidase_sf"/>
</dbReference>
<dbReference type="InterPro" id="IPR012341">
    <property type="entry name" value="6hp_glycosidase-like_sf"/>
</dbReference>
<dbReference type="InterPro" id="IPR001701">
    <property type="entry name" value="Glyco_hydro_9"/>
</dbReference>
<dbReference type="InterPro" id="IPR018221">
    <property type="entry name" value="Glyco_hydro_9_His_AS"/>
</dbReference>
<dbReference type="PANTHER" id="PTHR22298">
    <property type="entry name" value="ENDO-1,4-BETA-GLUCANASE"/>
    <property type="match status" value="1"/>
</dbReference>
<dbReference type="Pfam" id="PF00759">
    <property type="entry name" value="Glyco_hydro_9"/>
    <property type="match status" value="1"/>
</dbReference>
<dbReference type="SUPFAM" id="SSF48208">
    <property type="entry name" value="Six-hairpin glycosidases"/>
    <property type="match status" value="1"/>
</dbReference>
<dbReference type="PROSITE" id="PS60032">
    <property type="entry name" value="GH9_1"/>
    <property type="match status" value="1"/>
</dbReference>
<dbReference type="PROSITE" id="PS00592">
    <property type="entry name" value="GH9_2"/>
    <property type="match status" value="1"/>
</dbReference>
<comment type="catalytic activity">
    <reaction>
        <text>Endohydrolysis of (1-&gt;4)-beta-D-glucosidic linkages in cellulose, lichenin and cereal beta-D-glucans.</text>
        <dbReference type="EC" id="3.2.1.4"/>
    </reaction>
</comment>
<comment type="subcellular location">
    <subcellularLocation>
        <location evidence="1">Secreted</location>
    </subcellularLocation>
</comment>
<comment type="alternative products">
    <event type="alternative splicing"/>
    <isoform>
        <id>Q8GY58-1</id>
        <name>1</name>
        <sequence type="displayed"/>
    </isoform>
    <isoform>
        <id>Q8GY58-2</id>
        <name>2</name>
        <sequence type="described" ref="VSP_020387 VSP_020388"/>
    </isoform>
</comment>
<comment type="similarity">
    <text evidence="4 6">Belongs to the glycosyl hydrolase 9 (cellulase E) family.</text>
</comment>
<comment type="caution">
    <text evidence="6">The conserved 'Asp-461' active site is replaced by a Gly residue.</text>
</comment>